<feature type="chain" id="PRO_0000289135" description="DNA/RNA-binding protein KIN17">
    <location>
        <begin position="1"/>
        <end position="391"/>
    </location>
</feature>
<feature type="zinc finger region" description="C2H2-type" evidence="3">
    <location>
        <begin position="28"/>
        <end position="50"/>
    </location>
</feature>
<feature type="region of interest" description="Winged helix-turn-helix (wHTH)" evidence="1">
    <location>
        <begin position="51"/>
        <end position="160"/>
    </location>
</feature>
<feature type="region of interest" description="Disordered" evidence="4">
    <location>
        <begin position="206"/>
        <end position="258"/>
    </location>
</feature>
<feature type="region of interest" description="C-terminal subdomain A" evidence="2">
    <location>
        <begin position="282"/>
        <end position="332"/>
    </location>
</feature>
<feature type="region of interest" description="C-terminal subdomain B" evidence="2">
    <location>
        <begin position="338"/>
        <end position="389"/>
    </location>
</feature>
<feature type="coiled-coil region" evidence="3">
    <location>
        <begin position="147"/>
        <end position="180"/>
    </location>
</feature>
<feature type="coiled-coil region" evidence="3">
    <location>
        <begin position="252"/>
        <end position="275"/>
    </location>
</feature>
<feature type="modified residue" description="N6,N6,N6-trimethyllysine; by METTL22; alternate" evidence="2">
    <location>
        <position position="135"/>
    </location>
</feature>
<feature type="modified residue" description="N6-methyllysine; alternate" evidence="2">
    <location>
        <position position="135"/>
    </location>
</feature>
<proteinExistence type="evidence at protein level"/>
<gene>
    <name evidence="14" type="primary">Kin</name>
    <name type="synonym">Btcd</name>
    <name type="synonym">Kin17</name>
</gene>
<sequence>MGKSDFLSPKAIANRIKSKGLQKLRWYCQMCQKQCRDENGFKCHCMSESHQRQLLLASENPQQFMDYFSEEFRNDFLELLRRRFGTKRVHNNIVYNEYISHREHIHMNATQWETLTDFTKWLGREGLCKVDETPKGWYIQYIDRDPETIRRQLELEKKKKQDLDDEEKTAKFIEEQVRRGLEGKEQETPVFTELSRENEEEKVTFNLNKGAGGSAGATTSKSSSLGPSALKLLGSAASGKRKESSQSSAQPAKKKKSALDEIMELEEEKKRTARTDAWLQPGIVVKIITKKLGEKYHKKKGVVKEVIDRYTAVVKMTDSGDRLKLDQTHLETVIPAPGKRVLVLNGGYRGNEGTLESINEKAFSATIVIETGPLKGRRVEGIQYEDISKLA</sequence>
<accession>Q8K339</accession>
<accession>Q9CV58</accession>
<comment type="function">
    <text evidence="2 5 7 8 9">Involved in DNA replication and the cellular response to DNA damage. May participate in DNA replication factories and create a bridge between DNA replication and repair mediated by high molecular weight complexes. May play a role in illegitimate recombination and regulation of gene expression. May participate in mRNA processing. Binds, in vitro, to double-stranded DNA. Also shown to bind preferentially to curved DNA in vitro and in vivo. Binds via its C-terminal domain to RNA in vitro.</text>
</comment>
<comment type="subunit">
    <text evidence="1">Associated with DNA polymerase alpha, RFC1 and cyclin A, in multiprotein DNA replication complexes. Also associates with replication origins at the G1/S phase boundary and throughout the S phase in vivo (By similarity).</text>
</comment>
<comment type="subcellular location">
    <subcellularLocation>
        <location evidence="5">Nucleus</location>
    </subcellularLocation>
    <subcellularLocation>
        <location evidence="5">Cytoplasm</location>
    </subcellularLocation>
    <text evidence="2 5">During S phase, strongly associated with the nuclear matrix, and to chromosomal DNA in the presence of DNA damage. Also shows cytoplasmic localization in elongated spermatids.</text>
</comment>
<comment type="tissue specificity">
    <text evidence="5 7 9">Highly expressed in transformed mouse AtT20 neuroendocrine cells. Expressed at a lower level in testis, kidney, skeletal muscle, liver, lung, spleen, brain and heart and kidney. In testis, expressed at much higher levels in proliferating cells than in differentiating cells. Not detected in embryo.</text>
</comment>
<comment type="developmental stage">
    <text evidence="5">In testis, expression almost doubled from day 5 to days 17-22 postpartum (dpp) and then decreased by 28 dpp to reach a stable level in adult testis.</text>
</comment>
<comment type="domain">
    <text evidence="1">The C-terminal domain (268-393) is organized into 2 subdomains that bear structural similarities to SH3-like domains. Both subdomains adopt a similar 5-stranded beta-barrel-like fold and are connected to each other by a short linker of 5 residues. The 5 beta-sheets are packed at approximately right angles against each other. A highly conserved groove formed at the interface between the 2 subdomains, comprised of Lys residues 302 and 391 and other positively charged residues, may possibly be the site of RNA-binding (By similarity).</text>
</comment>
<comment type="miscellaneous">
    <text evidence="6 7">Recognized by antibodies directed against the RecA protein.</text>
</comment>
<comment type="similarity">
    <text evidence="10">Belongs to the KIN17 family.</text>
</comment>
<evidence type="ECO:0000250" key="1"/>
<evidence type="ECO:0000250" key="2">
    <source>
        <dbReference type="UniProtKB" id="O60870"/>
    </source>
</evidence>
<evidence type="ECO:0000255" key="3"/>
<evidence type="ECO:0000256" key="4">
    <source>
        <dbReference type="SAM" id="MobiDB-lite"/>
    </source>
</evidence>
<evidence type="ECO:0000269" key="5">
    <source>
    </source>
</evidence>
<evidence type="ECO:0000269" key="6">
    <source>
    </source>
</evidence>
<evidence type="ECO:0000269" key="7">
    <source>
    </source>
</evidence>
<evidence type="ECO:0000269" key="8">
    <source>
    </source>
</evidence>
<evidence type="ECO:0000269" key="9">
    <source>
    </source>
</evidence>
<evidence type="ECO:0000305" key="10"/>
<evidence type="ECO:0000312" key="11">
    <source>
        <dbReference type="EMBL" id="AAH28860.1"/>
    </source>
</evidence>
<evidence type="ECO:0000312" key="12">
    <source>
        <dbReference type="EMBL" id="BAB26281.3"/>
    </source>
</evidence>
<evidence type="ECO:0000312" key="13">
    <source>
        <dbReference type="EMBL" id="BAE39778.1"/>
    </source>
</evidence>
<evidence type="ECO:0000312" key="14">
    <source>
        <dbReference type="MGI" id="MGI:96676"/>
    </source>
</evidence>
<evidence type="ECO:0000312" key="15">
    <source>
        <dbReference type="PIR" id="S18666"/>
    </source>
</evidence>
<protein>
    <recommendedName>
        <fullName>DNA/RNA-binding protein KIN17</fullName>
    </recommendedName>
    <alternativeName>
        <fullName>Binding to curved DNA</fullName>
    </alternativeName>
    <alternativeName>
        <fullName>KIN, antigenic determinant of recA protein</fullName>
    </alternativeName>
</protein>
<dbReference type="EMBL" id="X58472">
    <property type="status" value="NOT_ANNOTATED_CDS"/>
    <property type="molecule type" value="mRNA"/>
</dbReference>
<dbReference type="EMBL" id="AK009429">
    <property type="protein sequence ID" value="BAB26281.3"/>
    <property type="molecule type" value="mRNA"/>
</dbReference>
<dbReference type="EMBL" id="AK167740">
    <property type="protein sequence ID" value="BAE39778.1"/>
    <property type="molecule type" value="mRNA"/>
</dbReference>
<dbReference type="EMBL" id="AL772367">
    <property type="status" value="NOT_ANNOTATED_CDS"/>
    <property type="molecule type" value="Genomic_DNA"/>
</dbReference>
<dbReference type="EMBL" id="BC028860">
    <property type="protein sequence ID" value="AAH28860.1"/>
    <property type="molecule type" value="mRNA"/>
</dbReference>
<dbReference type="CCDS" id="CCDS15676.1"/>
<dbReference type="PIR" id="S18666">
    <property type="entry name" value="S18666"/>
</dbReference>
<dbReference type="RefSeq" id="NP_079556.1">
    <property type="nucleotide sequence ID" value="NM_025280.3"/>
</dbReference>
<dbReference type="BMRB" id="Q8K339"/>
<dbReference type="SMR" id="Q8K339"/>
<dbReference type="FunCoup" id="Q8K339">
    <property type="interactions" value="4525"/>
</dbReference>
<dbReference type="IntAct" id="Q8K339">
    <property type="interactions" value="1"/>
</dbReference>
<dbReference type="MINT" id="Q8K339"/>
<dbReference type="STRING" id="10090.ENSMUSP00000043614"/>
<dbReference type="iPTMnet" id="Q8K339"/>
<dbReference type="PhosphoSitePlus" id="Q8K339"/>
<dbReference type="PaxDb" id="10090-ENSMUSP00000043614"/>
<dbReference type="PeptideAtlas" id="Q8K339"/>
<dbReference type="ProteomicsDB" id="269220"/>
<dbReference type="Pumba" id="Q8K339"/>
<dbReference type="Antibodypedia" id="4279">
    <property type="antibodies" value="114 antibodies from 28 providers"/>
</dbReference>
<dbReference type="DNASU" id="16588"/>
<dbReference type="Ensembl" id="ENSMUST00000042512.8">
    <property type="protein sequence ID" value="ENSMUSP00000043614.8"/>
    <property type="gene ID" value="ENSMUSG00000037262.8"/>
</dbReference>
<dbReference type="GeneID" id="16588"/>
<dbReference type="KEGG" id="mmu:16588"/>
<dbReference type="UCSC" id="uc008ihp.1">
    <property type="organism name" value="mouse"/>
</dbReference>
<dbReference type="AGR" id="MGI:96676"/>
<dbReference type="CTD" id="22944"/>
<dbReference type="MGI" id="MGI:96676">
    <property type="gene designation" value="Kin"/>
</dbReference>
<dbReference type="VEuPathDB" id="HostDB:ENSMUSG00000037262"/>
<dbReference type="eggNOG" id="KOG2837">
    <property type="taxonomic scope" value="Eukaryota"/>
</dbReference>
<dbReference type="GeneTree" id="ENSGT00390000005903"/>
<dbReference type="HOGENOM" id="CLU_030065_1_0_1"/>
<dbReference type="InParanoid" id="Q8K339"/>
<dbReference type="OMA" id="RMTDFIE"/>
<dbReference type="OrthoDB" id="10266249at2759"/>
<dbReference type="PhylomeDB" id="Q8K339"/>
<dbReference type="TreeFam" id="TF314393"/>
<dbReference type="Reactome" id="R-MMU-8876725">
    <property type="pathway name" value="Protein methylation"/>
</dbReference>
<dbReference type="BioGRID-ORCS" id="16588">
    <property type="hits" value="23 hits in 112 CRISPR screens"/>
</dbReference>
<dbReference type="PRO" id="PR:Q8K339"/>
<dbReference type="Proteomes" id="UP000000589">
    <property type="component" value="Chromosome 2"/>
</dbReference>
<dbReference type="RNAct" id="Q8K339">
    <property type="molecule type" value="protein"/>
</dbReference>
<dbReference type="Bgee" id="ENSMUSG00000037262">
    <property type="expression patterns" value="Expressed in granulocyte and 252 other cell types or tissues"/>
</dbReference>
<dbReference type="GO" id="GO:0005829">
    <property type="term" value="C:cytosol"/>
    <property type="evidence" value="ECO:0007669"/>
    <property type="project" value="Ensembl"/>
</dbReference>
<dbReference type="GO" id="GO:0016363">
    <property type="term" value="C:nuclear matrix"/>
    <property type="evidence" value="ECO:0000250"/>
    <property type="project" value="UniProtKB"/>
</dbReference>
<dbReference type="GO" id="GO:0005654">
    <property type="term" value="C:nucleoplasm"/>
    <property type="evidence" value="ECO:0007669"/>
    <property type="project" value="Ensembl"/>
</dbReference>
<dbReference type="GO" id="GO:0005634">
    <property type="term" value="C:nucleus"/>
    <property type="evidence" value="ECO:0000314"/>
    <property type="project" value="UniProtKB"/>
</dbReference>
<dbReference type="GO" id="GO:0032991">
    <property type="term" value="C:protein-containing complex"/>
    <property type="evidence" value="ECO:0007669"/>
    <property type="project" value="Ensembl"/>
</dbReference>
<dbReference type="GO" id="GO:0003690">
    <property type="term" value="F:double-stranded DNA binding"/>
    <property type="evidence" value="ECO:0000314"/>
    <property type="project" value="UniProtKB"/>
</dbReference>
<dbReference type="GO" id="GO:0003723">
    <property type="term" value="F:RNA binding"/>
    <property type="evidence" value="ECO:0000250"/>
    <property type="project" value="UniProtKB"/>
</dbReference>
<dbReference type="GO" id="GO:0008270">
    <property type="term" value="F:zinc ion binding"/>
    <property type="evidence" value="ECO:0007669"/>
    <property type="project" value="UniProtKB-KW"/>
</dbReference>
<dbReference type="GO" id="GO:0006974">
    <property type="term" value="P:DNA damage response"/>
    <property type="evidence" value="ECO:0000270"/>
    <property type="project" value="UniProtKB"/>
</dbReference>
<dbReference type="GO" id="GO:0006310">
    <property type="term" value="P:DNA recombination"/>
    <property type="evidence" value="ECO:0007669"/>
    <property type="project" value="UniProtKB-KW"/>
</dbReference>
<dbReference type="GO" id="GO:0006281">
    <property type="term" value="P:DNA repair"/>
    <property type="evidence" value="ECO:0007669"/>
    <property type="project" value="UniProtKB-KW"/>
</dbReference>
<dbReference type="GO" id="GO:0006260">
    <property type="term" value="P:DNA replication"/>
    <property type="evidence" value="ECO:0000314"/>
    <property type="project" value="UniProtKB"/>
</dbReference>
<dbReference type="GO" id="GO:0006397">
    <property type="term" value="P:mRNA processing"/>
    <property type="evidence" value="ECO:0007669"/>
    <property type="project" value="UniProtKB-KW"/>
</dbReference>
<dbReference type="CDD" id="cd13155">
    <property type="entry name" value="KOW_KIN17"/>
    <property type="match status" value="1"/>
</dbReference>
<dbReference type="FunFam" id="2.30.30.140:FF:000031">
    <property type="entry name" value="DNA/RNA-binding protein KIN17 isoform X1"/>
    <property type="match status" value="1"/>
</dbReference>
<dbReference type="FunFam" id="1.10.10.2030:FF:000001">
    <property type="entry name" value="DNA/RNA-binding protein KIN17, putative"/>
    <property type="match status" value="1"/>
</dbReference>
<dbReference type="FunFam" id="2.30.30.30:FF:000021">
    <property type="entry name" value="DNA/RNA-binding protein KIN17, putative"/>
    <property type="match status" value="1"/>
</dbReference>
<dbReference type="Gene3D" id="2.30.30.140">
    <property type="match status" value="1"/>
</dbReference>
<dbReference type="Gene3D" id="2.30.30.30">
    <property type="match status" value="1"/>
</dbReference>
<dbReference type="Gene3D" id="1.10.10.2030">
    <property type="entry name" value="DNA/RNA-binding protein Kin17, conserved domain"/>
    <property type="match status" value="1"/>
</dbReference>
<dbReference type="InterPro" id="IPR056767">
    <property type="entry name" value="C2H2-Znf_KIN17"/>
</dbReference>
<dbReference type="InterPro" id="IPR019447">
    <property type="entry name" value="DNA/RNA-bd_Kin17_WH-like_dom"/>
</dbReference>
<dbReference type="InterPro" id="IPR037321">
    <property type="entry name" value="KIN17-like"/>
</dbReference>
<dbReference type="InterPro" id="IPR038254">
    <property type="entry name" value="KIN17_WH-like_sf"/>
</dbReference>
<dbReference type="InterPro" id="IPR041330">
    <property type="entry name" value="KN17_SH3"/>
</dbReference>
<dbReference type="InterPro" id="IPR041995">
    <property type="entry name" value="KOW_KIN17"/>
</dbReference>
<dbReference type="InterPro" id="IPR014722">
    <property type="entry name" value="Rib_uL2_dom2"/>
</dbReference>
<dbReference type="InterPro" id="IPR036236">
    <property type="entry name" value="Znf_C2H2_sf"/>
</dbReference>
<dbReference type="PANTHER" id="PTHR12805:SF0">
    <property type="entry name" value="DNA_RNA-BINDING PROTEIN KIN17"/>
    <property type="match status" value="1"/>
</dbReference>
<dbReference type="PANTHER" id="PTHR12805">
    <property type="entry name" value="KIN17 KIN, ANTIGENIC DETERMINANT OF RECA PROTEIN HOMOLOG"/>
    <property type="match status" value="1"/>
</dbReference>
<dbReference type="Pfam" id="PF25095">
    <property type="entry name" value="C2H2-zf_KIN17"/>
    <property type="match status" value="1"/>
</dbReference>
<dbReference type="Pfam" id="PF18131">
    <property type="entry name" value="KN17_SH3"/>
    <property type="match status" value="1"/>
</dbReference>
<dbReference type="Pfam" id="PF25092">
    <property type="entry name" value="SH3_KIN17_C"/>
    <property type="match status" value="1"/>
</dbReference>
<dbReference type="Pfam" id="PF10357">
    <property type="entry name" value="WH_KIN17"/>
    <property type="match status" value="1"/>
</dbReference>
<dbReference type="SMART" id="SM01253">
    <property type="entry name" value="Kin17_mid"/>
    <property type="match status" value="1"/>
</dbReference>
<dbReference type="SUPFAM" id="SSF57667">
    <property type="entry name" value="beta-beta-alpha zinc fingers"/>
    <property type="match status" value="1"/>
</dbReference>
<dbReference type="PROSITE" id="PS00028">
    <property type="entry name" value="ZINC_FINGER_C2H2_1"/>
    <property type="match status" value="1"/>
</dbReference>
<reference evidence="10 15" key="1">
    <citation type="journal article" date="1991" name="Nucleic Acids Res.">
        <title>Identification and expression of the cDNA of KIN17, a zinc-finger gene located on mouse chromosome 2, encoding a new DNA-binding protein.</title>
        <authorList>
            <person name="Angulo J.F."/>
            <person name="Rouer E."/>
            <person name="Mazin A."/>
            <person name="Mattei M.-G."/>
            <person name="Tissier A."/>
            <person name="Horellou P."/>
            <person name="Benarous R."/>
            <person name="Devoret R."/>
        </authorList>
    </citation>
    <scope>NUCLEOTIDE SEQUENCE [MRNA]</scope>
    <scope>FUNCTION</scope>
    <scope>TISSUE SPECIFICITY</scope>
    <source>
        <tissue evidence="7">Embryonic brain</tissue>
    </source>
</reference>
<reference evidence="13" key="2">
    <citation type="journal article" date="2005" name="Science">
        <title>The transcriptional landscape of the mammalian genome.</title>
        <authorList>
            <person name="Carninci P."/>
            <person name="Kasukawa T."/>
            <person name="Katayama S."/>
            <person name="Gough J."/>
            <person name="Frith M.C."/>
            <person name="Maeda N."/>
            <person name="Oyama R."/>
            <person name="Ravasi T."/>
            <person name="Lenhard B."/>
            <person name="Wells C."/>
            <person name="Kodzius R."/>
            <person name="Shimokawa K."/>
            <person name="Bajic V.B."/>
            <person name="Brenner S.E."/>
            <person name="Batalov S."/>
            <person name="Forrest A.R."/>
            <person name="Zavolan M."/>
            <person name="Davis M.J."/>
            <person name="Wilming L.G."/>
            <person name="Aidinis V."/>
            <person name="Allen J.E."/>
            <person name="Ambesi-Impiombato A."/>
            <person name="Apweiler R."/>
            <person name="Aturaliya R.N."/>
            <person name="Bailey T.L."/>
            <person name="Bansal M."/>
            <person name="Baxter L."/>
            <person name="Beisel K.W."/>
            <person name="Bersano T."/>
            <person name="Bono H."/>
            <person name="Chalk A.M."/>
            <person name="Chiu K.P."/>
            <person name="Choudhary V."/>
            <person name="Christoffels A."/>
            <person name="Clutterbuck D.R."/>
            <person name="Crowe M.L."/>
            <person name="Dalla E."/>
            <person name="Dalrymple B.P."/>
            <person name="de Bono B."/>
            <person name="Della Gatta G."/>
            <person name="di Bernardo D."/>
            <person name="Down T."/>
            <person name="Engstrom P."/>
            <person name="Fagiolini M."/>
            <person name="Faulkner G."/>
            <person name="Fletcher C.F."/>
            <person name="Fukushima T."/>
            <person name="Furuno M."/>
            <person name="Futaki S."/>
            <person name="Gariboldi M."/>
            <person name="Georgii-Hemming P."/>
            <person name="Gingeras T.R."/>
            <person name="Gojobori T."/>
            <person name="Green R.E."/>
            <person name="Gustincich S."/>
            <person name="Harbers M."/>
            <person name="Hayashi Y."/>
            <person name="Hensch T.K."/>
            <person name="Hirokawa N."/>
            <person name="Hill D."/>
            <person name="Huminiecki L."/>
            <person name="Iacono M."/>
            <person name="Ikeo K."/>
            <person name="Iwama A."/>
            <person name="Ishikawa T."/>
            <person name="Jakt M."/>
            <person name="Kanapin A."/>
            <person name="Katoh M."/>
            <person name="Kawasawa Y."/>
            <person name="Kelso J."/>
            <person name="Kitamura H."/>
            <person name="Kitano H."/>
            <person name="Kollias G."/>
            <person name="Krishnan S.P."/>
            <person name="Kruger A."/>
            <person name="Kummerfeld S.K."/>
            <person name="Kurochkin I.V."/>
            <person name="Lareau L.F."/>
            <person name="Lazarevic D."/>
            <person name="Lipovich L."/>
            <person name="Liu J."/>
            <person name="Liuni S."/>
            <person name="McWilliam S."/>
            <person name="Madan Babu M."/>
            <person name="Madera M."/>
            <person name="Marchionni L."/>
            <person name="Matsuda H."/>
            <person name="Matsuzawa S."/>
            <person name="Miki H."/>
            <person name="Mignone F."/>
            <person name="Miyake S."/>
            <person name="Morris K."/>
            <person name="Mottagui-Tabar S."/>
            <person name="Mulder N."/>
            <person name="Nakano N."/>
            <person name="Nakauchi H."/>
            <person name="Ng P."/>
            <person name="Nilsson R."/>
            <person name="Nishiguchi S."/>
            <person name="Nishikawa S."/>
            <person name="Nori F."/>
            <person name="Ohara O."/>
            <person name="Okazaki Y."/>
            <person name="Orlando V."/>
            <person name="Pang K.C."/>
            <person name="Pavan W.J."/>
            <person name="Pavesi G."/>
            <person name="Pesole G."/>
            <person name="Petrovsky N."/>
            <person name="Piazza S."/>
            <person name="Reed J."/>
            <person name="Reid J.F."/>
            <person name="Ring B.Z."/>
            <person name="Ringwald M."/>
            <person name="Rost B."/>
            <person name="Ruan Y."/>
            <person name="Salzberg S.L."/>
            <person name="Sandelin A."/>
            <person name="Schneider C."/>
            <person name="Schoenbach C."/>
            <person name="Sekiguchi K."/>
            <person name="Semple C.A."/>
            <person name="Seno S."/>
            <person name="Sessa L."/>
            <person name="Sheng Y."/>
            <person name="Shibata Y."/>
            <person name="Shimada H."/>
            <person name="Shimada K."/>
            <person name="Silva D."/>
            <person name="Sinclair B."/>
            <person name="Sperling S."/>
            <person name="Stupka E."/>
            <person name="Sugiura K."/>
            <person name="Sultana R."/>
            <person name="Takenaka Y."/>
            <person name="Taki K."/>
            <person name="Tammoja K."/>
            <person name="Tan S.L."/>
            <person name="Tang S."/>
            <person name="Taylor M.S."/>
            <person name="Tegner J."/>
            <person name="Teichmann S.A."/>
            <person name="Ueda H.R."/>
            <person name="van Nimwegen E."/>
            <person name="Verardo R."/>
            <person name="Wei C.L."/>
            <person name="Yagi K."/>
            <person name="Yamanishi H."/>
            <person name="Zabarovsky E."/>
            <person name="Zhu S."/>
            <person name="Zimmer A."/>
            <person name="Hide W."/>
            <person name="Bult C."/>
            <person name="Grimmond S.M."/>
            <person name="Teasdale R.D."/>
            <person name="Liu E.T."/>
            <person name="Brusic V."/>
            <person name="Quackenbush J."/>
            <person name="Wahlestedt C."/>
            <person name="Mattick J.S."/>
            <person name="Hume D.A."/>
            <person name="Kai C."/>
            <person name="Sasaki D."/>
            <person name="Tomaru Y."/>
            <person name="Fukuda S."/>
            <person name="Kanamori-Katayama M."/>
            <person name="Suzuki M."/>
            <person name="Aoki J."/>
            <person name="Arakawa T."/>
            <person name="Iida J."/>
            <person name="Imamura K."/>
            <person name="Itoh M."/>
            <person name="Kato T."/>
            <person name="Kawaji H."/>
            <person name="Kawagashira N."/>
            <person name="Kawashima T."/>
            <person name="Kojima M."/>
            <person name="Kondo S."/>
            <person name="Konno H."/>
            <person name="Nakano K."/>
            <person name="Ninomiya N."/>
            <person name="Nishio T."/>
            <person name="Okada M."/>
            <person name="Plessy C."/>
            <person name="Shibata K."/>
            <person name="Shiraki T."/>
            <person name="Suzuki S."/>
            <person name="Tagami M."/>
            <person name="Waki K."/>
            <person name="Watahiki A."/>
            <person name="Okamura-Oho Y."/>
            <person name="Suzuki H."/>
            <person name="Kawai J."/>
            <person name="Hayashizaki Y."/>
        </authorList>
    </citation>
    <scope>NUCLEOTIDE SEQUENCE [LARGE SCALE MRNA]</scope>
    <source>
        <strain evidence="12">C57BL/6J</strain>
        <strain evidence="13">DBA/2J</strain>
        <tissue evidence="12">Tongue</tissue>
    </source>
</reference>
<reference key="3">
    <citation type="journal article" date="2009" name="PLoS Biol.">
        <title>Lineage-specific biology revealed by a finished genome assembly of the mouse.</title>
        <authorList>
            <person name="Church D.M."/>
            <person name="Goodstadt L."/>
            <person name="Hillier L.W."/>
            <person name="Zody M.C."/>
            <person name="Goldstein S."/>
            <person name="She X."/>
            <person name="Bult C.J."/>
            <person name="Agarwala R."/>
            <person name="Cherry J.L."/>
            <person name="DiCuccio M."/>
            <person name="Hlavina W."/>
            <person name="Kapustin Y."/>
            <person name="Meric P."/>
            <person name="Maglott D."/>
            <person name="Birtle Z."/>
            <person name="Marques A.C."/>
            <person name="Graves T."/>
            <person name="Zhou S."/>
            <person name="Teague B."/>
            <person name="Potamousis K."/>
            <person name="Churas C."/>
            <person name="Place M."/>
            <person name="Herschleb J."/>
            <person name="Runnheim R."/>
            <person name="Forrest D."/>
            <person name="Amos-Landgraf J."/>
            <person name="Schwartz D.C."/>
            <person name="Cheng Z."/>
            <person name="Lindblad-Toh K."/>
            <person name="Eichler E.E."/>
            <person name="Ponting C.P."/>
        </authorList>
    </citation>
    <scope>NUCLEOTIDE SEQUENCE [LARGE SCALE GENOMIC DNA]</scope>
    <source>
        <strain>C57BL/6J</strain>
    </source>
</reference>
<reference evidence="11" key="4">
    <citation type="journal article" date="2004" name="Genome Res.">
        <title>The status, quality, and expansion of the NIH full-length cDNA project: the Mammalian Gene Collection (MGC).</title>
        <authorList>
            <consortium name="The MGC Project Team"/>
        </authorList>
    </citation>
    <scope>NUCLEOTIDE SEQUENCE [LARGE SCALE MRNA]</scope>
    <source>
        <strain evidence="11">FVB/N</strain>
        <tissue evidence="11">Mammary tumor</tissue>
    </source>
</reference>
<reference evidence="10" key="5">
    <citation type="journal article" date="1991" name="Biochimie">
        <title>Identification of a mouse cDNA fragment whose expressed polypeptide reacts with anti-recA antibodies.</title>
        <authorList>
            <person name="Angulo J.F."/>
            <person name="Rouer E."/>
            <person name="Benarous R."/>
            <person name="Devoret R."/>
        </authorList>
    </citation>
    <scope>NUCLEOTIDE SEQUENCE [MRNA] OF 74-273</scope>
</reference>
<reference key="6">
    <citation type="journal article" date="1996" name="EMBO J.">
        <title>Btcd, a mouse protein that binds to curved DNA, can substitute in Escherichia coli for H-NS, a bacterial nucleoid protein.</title>
        <authorList>
            <person name="Timchenko T."/>
            <person name="Bailone A."/>
            <person name="Devoret R."/>
        </authorList>
    </citation>
    <scope>FUNCTION</scope>
</reference>
<reference evidence="10" key="7">
    <citation type="journal article" date="1996" name="Genomics">
        <title>Molecular cloning and characterization of the mouse Kin17 gene coding for a Zn-finger protein that preferentially recognizes bent DNA.</title>
        <authorList>
            <person name="Tissier A."/>
            <person name="Kannouche P."/>
            <person name="Mauffrey P."/>
            <person name="Allemand I."/>
            <person name="Frelat G."/>
            <person name="Devoret R."/>
            <person name="Angulo J.F."/>
        </authorList>
    </citation>
    <scope>FUNCTION</scope>
    <scope>TISSUE SPECIFICITY</scope>
</reference>
<reference evidence="10" key="8">
    <citation type="journal article" date="2004" name="J. Cell Sci.">
        <title>KIN17 encodes an RNA-binding protein and is expressed during mouse spermatogenesis.</title>
        <authorList>
            <person name="Pinon-Lataillade G."/>
            <person name="Masson C."/>
            <person name="Bernardino-Sgherri J."/>
            <person name="Henriot V."/>
            <person name="Mauffrey P."/>
            <person name="Frobert Y."/>
            <person name="Araneda S."/>
            <person name="Angulo J.F."/>
        </authorList>
    </citation>
    <scope>FUNCTION</scope>
    <scope>SUBCELLULAR LOCATION</scope>
    <scope>TISSUE SPECIFICITY</scope>
    <scope>DEVELOPMENTAL STAGE</scope>
</reference>
<reference key="9">
    <citation type="journal article" date="2010" name="Cell">
        <title>A tissue-specific atlas of mouse protein phosphorylation and expression.</title>
        <authorList>
            <person name="Huttlin E.L."/>
            <person name="Jedrychowski M.P."/>
            <person name="Elias J.E."/>
            <person name="Goswami T."/>
            <person name="Rad R."/>
            <person name="Beausoleil S.A."/>
            <person name="Villen J."/>
            <person name="Haas W."/>
            <person name="Sowa M.E."/>
            <person name="Gygi S.P."/>
        </authorList>
    </citation>
    <scope>IDENTIFICATION BY MASS SPECTROMETRY [LARGE SCALE ANALYSIS]</scope>
    <source>
        <tissue>Testis</tissue>
    </source>
</reference>
<keyword id="KW-0175">Coiled coil</keyword>
<keyword id="KW-0963">Cytoplasm</keyword>
<keyword id="KW-0227">DNA damage</keyword>
<keyword id="KW-0233">DNA recombination</keyword>
<keyword id="KW-0234">DNA repair</keyword>
<keyword id="KW-0235">DNA replication</keyword>
<keyword id="KW-0238">DNA-binding</keyword>
<keyword id="KW-0479">Metal-binding</keyword>
<keyword id="KW-0488">Methylation</keyword>
<keyword id="KW-0507">mRNA processing</keyword>
<keyword id="KW-0539">Nucleus</keyword>
<keyword id="KW-1185">Reference proteome</keyword>
<keyword id="KW-0694">RNA-binding</keyword>
<keyword id="KW-0346">Stress response</keyword>
<keyword id="KW-0862">Zinc</keyword>
<keyword id="KW-0863">Zinc-finger</keyword>
<name>KIN17_MOUSE</name>
<organism>
    <name type="scientific">Mus musculus</name>
    <name type="common">Mouse</name>
    <dbReference type="NCBI Taxonomy" id="10090"/>
    <lineage>
        <taxon>Eukaryota</taxon>
        <taxon>Metazoa</taxon>
        <taxon>Chordata</taxon>
        <taxon>Craniata</taxon>
        <taxon>Vertebrata</taxon>
        <taxon>Euteleostomi</taxon>
        <taxon>Mammalia</taxon>
        <taxon>Eutheria</taxon>
        <taxon>Euarchontoglires</taxon>
        <taxon>Glires</taxon>
        <taxon>Rodentia</taxon>
        <taxon>Myomorpha</taxon>
        <taxon>Muroidea</taxon>
        <taxon>Muridae</taxon>
        <taxon>Murinae</taxon>
        <taxon>Mus</taxon>
        <taxon>Mus</taxon>
    </lineage>
</organism>